<comment type="function">
    <text evidence="1">Converts alpha-N-acetylneuranimic acid (Neu5Ac) to the beta-anomer, accelerating the equilibrium between the alpha- and beta-anomers. Probably facilitates sialidase-negative bacteria to compete successfully for limited amounts of extracellular Neu5Ac, which is likely taken up in the beta-anomer. In addition, the rapid removal of sialic acid from solution might be advantageous to the bacterium to damp down host responses.</text>
</comment>
<comment type="catalytic activity">
    <reaction evidence="1">
        <text>N-acetyl-alpha-neuraminate = N-acetyl-beta-neuraminate</text>
        <dbReference type="Rhea" id="RHEA:25233"/>
        <dbReference type="ChEBI" id="CHEBI:58705"/>
        <dbReference type="ChEBI" id="CHEBI:58770"/>
        <dbReference type="EC" id="5.1.3.24"/>
    </reaction>
</comment>
<comment type="subunit">
    <text evidence="1">Homodimer.</text>
</comment>
<comment type="subcellular location">
    <subcellularLocation>
        <location evidence="1">Periplasm</location>
    </subcellularLocation>
</comment>
<comment type="similarity">
    <text evidence="1">Belongs to the NanM family.</text>
</comment>
<comment type="sequence caution" evidence="2">
    <conflict type="erroneous initiation">
        <sequence resource="EMBL-CDS" id="ABE10409"/>
    </conflict>
</comment>
<dbReference type="EC" id="5.1.3.24" evidence="1"/>
<dbReference type="EMBL" id="CP000243">
    <property type="protein sequence ID" value="ABE10409.1"/>
    <property type="status" value="ALT_INIT"/>
    <property type="molecule type" value="Genomic_DNA"/>
</dbReference>
<dbReference type="RefSeq" id="WP_001298082.1">
    <property type="nucleotide sequence ID" value="NZ_CP064825.1"/>
</dbReference>
<dbReference type="SMR" id="Q1R2K5"/>
<dbReference type="KEGG" id="eci:UTI89_C5006"/>
<dbReference type="HOGENOM" id="CLU_061535_0_0_6"/>
<dbReference type="Proteomes" id="UP000001952">
    <property type="component" value="Chromosome"/>
</dbReference>
<dbReference type="GO" id="GO:0042597">
    <property type="term" value="C:periplasmic space"/>
    <property type="evidence" value="ECO:0007669"/>
    <property type="project" value="UniProtKB-SubCell"/>
</dbReference>
<dbReference type="GO" id="GO:0016857">
    <property type="term" value="F:racemase and epimerase activity, acting on carbohydrates and derivatives"/>
    <property type="evidence" value="ECO:0007669"/>
    <property type="project" value="UniProtKB-UniRule"/>
</dbReference>
<dbReference type="FunFam" id="2.120.10.80:FF:000061">
    <property type="entry name" value="N-acetylneuraminate epimerase"/>
    <property type="match status" value="1"/>
</dbReference>
<dbReference type="FunFam" id="2.120.10.80:FF:000067">
    <property type="entry name" value="N-acetylneuraminate epimerase"/>
    <property type="match status" value="1"/>
</dbReference>
<dbReference type="Gene3D" id="2.120.10.80">
    <property type="entry name" value="Kelch-type beta propeller"/>
    <property type="match status" value="2"/>
</dbReference>
<dbReference type="HAMAP" id="MF_01195">
    <property type="entry name" value="NanM"/>
    <property type="match status" value="1"/>
</dbReference>
<dbReference type="InterPro" id="IPR015915">
    <property type="entry name" value="Kelch-typ_b-propeller"/>
</dbReference>
<dbReference type="InterPro" id="IPR056734">
    <property type="entry name" value="NANM"/>
</dbReference>
<dbReference type="InterPro" id="IPR019936">
    <property type="entry name" value="NanM_proteobact"/>
</dbReference>
<dbReference type="NCBIfam" id="TIGR03547">
    <property type="entry name" value="muta_rot_YjhT"/>
    <property type="match status" value="1"/>
</dbReference>
<dbReference type="NCBIfam" id="NF010730">
    <property type="entry name" value="PRK14131.1"/>
    <property type="match status" value="1"/>
</dbReference>
<dbReference type="PANTHER" id="PTHR45632">
    <property type="entry name" value="LD33804P"/>
    <property type="match status" value="1"/>
</dbReference>
<dbReference type="Pfam" id="PF24996">
    <property type="entry name" value="NANM"/>
    <property type="match status" value="1"/>
</dbReference>
<dbReference type="SUPFAM" id="SSF117281">
    <property type="entry name" value="Kelch motif"/>
    <property type="match status" value="1"/>
</dbReference>
<evidence type="ECO:0000255" key="1">
    <source>
        <dbReference type="HAMAP-Rule" id="MF_01195"/>
    </source>
</evidence>
<evidence type="ECO:0000305" key="2"/>
<protein>
    <recommendedName>
        <fullName evidence="1">N-acetylneuraminate epimerase</fullName>
        <ecNumber evidence="1">5.1.3.24</ecNumber>
    </recommendedName>
    <alternativeName>
        <fullName evidence="1">N-acetylneuraminate mutarotase</fullName>
        <shortName evidence="1">Neu5Ac mutarotase</shortName>
    </alternativeName>
    <alternativeName>
        <fullName evidence="1">Sialic acid epimerase</fullName>
    </alternativeName>
</protein>
<feature type="signal peptide" evidence="1">
    <location>
        <begin position="1"/>
        <end position="19"/>
    </location>
</feature>
<feature type="chain" id="PRO_0000333053" description="N-acetylneuraminate epimerase">
    <location>
        <begin position="20"/>
        <end position="368"/>
    </location>
</feature>
<feature type="repeat" description="Kelch 1">
    <location>
        <begin position="40"/>
        <end position="84"/>
    </location>
</feature>
<feature type="repeat" description="Kelch 2">
    <location>
        <begin position="86"/>
        <end position="137"/>
    </location>
</feature>
<feature type="repeat" description="Kelch 3">
    <location>
        <begin position="139"/>
        <end position="173"/>
    </location>
</feature>
<feature type="repeat" description="Kelch 4">
    <location>
        <begin position="174"/>
        <end position="219"/>
    </location>
</feature>
<feature type="repeat" description="Kelch 5">
    <location>
        <begin position="222"/>
        <end position="265"/>
    </location>
</feature>
<feature type="repeat" description="Kelch 6">
    <location>
        <begin position="287"/>
        <end position="336"/>
    </location>
</feature>
<feature type="repeat" description="Kelch 7">
    <location>
        <begin position="338"/>
        <end position="367"/>
    </location>
</feature>
<feature type="active site" description="Proton acceptor" evidence="1">
    <location>
        <position position="228"/>
    </location>
</feature>
<organism>
    <name type="scientific">Escherichia coli (strain UTI89 / UPEC)</name>
    <dbReference type="NCBI Taxonomy" id="364106"/>
    <lineage>
        <taxon>Bacteria</taxon>
        <taxon>Pseudomonadati</taxon>
        <taxon>Pseudomonadota</taxon>
        <taxon>Gammaproteobacteria</taxon>
        <taxon>Enterobacterales</taxon>
        <taxon>Enterobacteriaceae</taxon>
        <taxon>Escherichia</taxon>
    </lineage>
</organism>
<gene>
    <name evidence="1" type="primary">nanM</name>
    <name type="ordered locus">UTI89_C5006</name>
</gene>
<accession>Q1R2K5</accession>
<sequence>MNKTITALTIIMASFATNASVLPETPVPFKSGTGAIDNDTVYIGLGSAGTAWYKLDTQAKDKKWTALAAFPGGPRDQATSAFIDGNLYVFGGIGKNSEGLTQVFNDVHKYNPKTNSWVKLMSHAPMGMAGHVTFVHNGKAYVTGGVNQNIFNGYFEDLNEAGKDSTTIDKINAHYFDKKAEDYFFNKFLLSFDPSTQQWSYAGESPWYGTAGAAVVNKGDKTWLINGEAKPGLRTDAVFELDFTGNNLKWNKLAPVASPDGVAGGFAGMSNDSLIFAGGAGFKGSRENYQNGKNYAHEGLKKSYSADIHLWHNGKWDKSGELSQGRAYGVSLPWNNSLLIIGGETAGGKAVTDSVLISVKDNKVTVQN</sequence>
<name>NANM_ECOUT</name>
<proteinExistence type="inferred from homology"/>
<reference key="1">
    <citation type="journal article" date="2006" name="Proc. Natl. Acad. Sci. U.S.A.">
        <title>Identification of genes subject to positive selection in uropathogenic strains of Escherichia coli: a comparative genomics approach.</title>
        <authorList>
            <person name="Chen S.L."/>
            <person name="Hung C.-S."/>
            <person name="Xu J."/>
            <person name="Reigstad C.S."/>
            <person name="Magrini V."/>
            <person name="Sabo A."/>
            <person name="Blasiar D."/>
            <person name="Bieri T."/>
            <person name="Meyer R.R."/>
            <person name="Ozersky P."/>
            <person name="Armstrong J.R."/>
            <person name="Fulton R.S."/>
            <person name="Latreille J.P."/>
            <person name="Spieth J."/>
            <person name="Hooton T.M."/>
            <person name="Mardis E.R."/>
            <person name="Hultgren S.J."/>
            <person name="Gordon J.I."/>
        </authorList>
    </citation>
    <scope>NUCLEOTIDE SEQUENCE [LARGE SCALE GENOMIC DNA]</scope>
    <source>
        <strain>UTI89 / UPEC</strain>
    </source>
</reference>
<keyword id="KW-0119">Carbohydrate metabolism</keyword>
<keyword id="KW-0413">Isomerase</keyword>
<keyword id="KW-0880">Kelch repeat</keyword>
<keyword id="KW-0574">Periplasm</keyword>
<keyword id="KW-0677">Repeat</keyword>
<keyword id="KW-0732">Signal</keyword>